<dbReference type="EC" id="3.1.-.-" evidence="1"/>
<dbReference type="EMBL" id="AP009247">
    <property type="protein sequence ID" value="BAF61259.1"/>
    <property type="molecule type" value="Genomic_DNA"/>
</dbReference>
<dbReference type="RefSeq" id="WP_011929529.1">
    <property type="nucleotide sequence ID" value="NC_009465.1"/>
</dbReference>
<dbReference type="SMR" id="A5CXS1"/>
<dbReference type="STRING" id="412965.COSY_0125"/>
<dbReference type="KEGG" id="vok:COSY_0125"/>
<dbReference type="eggNOG" id="COG0319">
    <property type="taxonomic scope" value="Bacteria"/>
</dbReference>
<dbReference type="HOGENOM" id="CLU_106710_0_2_6"/>
<dbReference type="OrthoDB" id="9807740at2"/>
<dbReference type="Proteomes" id="UP000000247">
    <property type="component" value="Chromosome"/>
</dbReference>
<dbReference type="GO" id="GO:0005737">
    <property type="term" value="C:cytoplasm"/>
    <property type="evidence" value="ECO:0007669"/>
    <property type="project" value="UniProtKB-SubCell"/>
</dbReference>
<dbReference type="GO" id="GO:0004222">
    <property type="term" value="F:metalloendopeptidase activity"/>
    <property type="evidence" value="ECO:0007669"/>
    <property type="project" value="InterPro"/>
</dbReference>
<dbReference type="GO" id="GO:0004521">
    <property type="term" value="F:RNA endonuclease activity"/>
    <property type="evidence" value="ECO:0007669"/>
    <property type="project" value="UniProtKB-UniRule"/>
</dbReference>
<dbReference type="GO" id="GO:0008270">
    <property type="term" value="F:zinc ion binding"/>
    <property type="evidence" value="ECO:0007669"/>
    <property type="project" value="UniProtKB-UniRule"/>
</dbReference>
<dbReference type="GO" id="GO:0006364">
    <property type="term" value="P:rRNA processing"/>
    <property type="evidence" value="ECO:0007669"/>
    <property type="project" value="UniProtKB-UniRule"/>
</dbReference>
<dbReference type="Gene3D" id="3.40.390.30">
    <property type="entry name" value="Metalloproteases ('zincins'), catalytic domain"/>
    <property type="match status" value="1"/>
</dbReference>
<dbReference type="HAMAP" id="MF_00009">
    <property type="entry name" value="Endoribonucl_YbeY"/>
    <property type="match status" value="1"/>
</dbReference>
<dbReference type="InterPro" id="IPR023091">
    <property type="entry name" value="MetalPrtase_cat_dom_sf_prd"/>
</dbReference>
<dbReference type="InterPro" id="IPR002036">
    <property type="entry name" value="YbeY"/>
</dbReference>
<dbReference type="InterPro" id="IPR020549">
    <property type="entry name" value="YbeY_CS"/>
</dbReference>
<dbReference type="NCBIfam" id="TIGR00043">
    <property type="entry name" value="rRNA maturation RNase YbeY"/>
    <property type="match status" value="1"/>
</dbReference>
<dbReference type="PANTHER" id="PTHR46986">
    <property type="entry name" value="ENDORIBONUCLEASE YBEY, CHLOROPLASTIC"/>
    <property type="match status" value="1"/>
</dbReference>
<dbReference type="PANTHER" id="PTHR46986:SF1">
    <property type="entry name" value="ENDORIBONUCLEASE YBEY, CHLOROPLASTIC"/>
    <property type="match status" value="1"/>
</dbReference>
<dbReference type="Pfam" id="PF02130">
    <property type="entry name" value="YbeY"/>
    <property type="match status" value="1"/>
</dbReference>
<dbReference type="SUPFAM" id="SSF55486">
    <property type="entry name" value="Metalloproteases ('zincins'), catalytic domain"/>
    <property type="match status" value="1"/>
</dbReference>
<dbReference type="PROSITE" id="PS01306">
    <property type="entry name" value="UPF0054"/>
    <property type="match status" value="1"/>
</dbReference>
<evidence type="ECO:0000255" key="1">
    <source>
        <dbReference type="HAMAP-Rule" id="MF_00009"/>
    </source>
</evidence>
<protein>
    <recommendedName>
        <fullName evidence="1">Endoribonuclease YbeY</fullName>
        <ecNumber evidence="1">3.1.-.-</ecNumber>
    </recommendedName>
</protein>
<feature type="chain" id="PRO_1000000752" description="Endoribonuclease YbeY">
    <location>
        <begin position="1"/>
        <end position="145"/>
    </location>
</feature>
<feature type="binding site" evidence="1">
    <location>
        <position position="109"/>
    </location>
    <ligand>
        <name>Zn(2+)</name>
        <dbReference type="ChEBI" id="CHEBI:29105"/>
        <note>catalytic</note>
    </ligand>
</feature>
<feature type="binding site" evidence="1">
    <location>
        <position position="113"/>
    </location>
    <ligand>
        <name>Zn(2+)</name>
        <dbReference type="ChEBI" id="CHEBI:29105"/>
        <note>catalytic</note>
    </ligand>
</feature>
<feature type="binding site" evidence="1">
    <location>
        <position position="119"/>
    </location>
    <ligand>
        <name>Zn(2+)</name>
        <dbReference type="ChEBI" id="CHEBI:29105"/>
        <note>catalytic</note>
    </ligand>
</feature>
<comment type="function">
    <text evidence="1">Single strand-specific metallo-endoribonuclease involved in late-stage 70S ribosome quality control and in maturation of the 3' terminus of the 16S rRNA.</text>
</comment>
<comment type="cofactor">
    <cofactor evidence="1">
        <name>Zn(2+)</name>
        <dbReference type="ChEBI" id="CHEBI:29105"/>
    </cofactor>
    <text evidence="1">Binds 1 zinc ion.</text>
</comment>
<comment type="subcellular location">
    <subcellularLocation>
        <location evidence="1">Cytoplasm</location>
    </subcellularLocation>
</comment>
<comment type="similarity">
    <text evidence="1">Belongs to the endoribonuclease YbeY family.</text>
</comment>
<sequence>MVIIQNNIHDLSVNEDDLSCILQKVVKEWGKGESELLVRLVDEAEIQNLNKVYRYKDEPTNVLSFPTDLPIEIDEKILGDVVICIQIVLKESIEQHKSFNNHLMHMAVHGTLHLLGYDHIDTKDAQNMANLERKILAKIGINNPY</sequence>
<gene>
    <name evidence="1" type="primary">ybeY</name>
    <name type="ordered locus">COSY_0125</name>
</gene>
<proteinExistence type="inferred from homology"/>
<organism>
    <name type="scientific">Vesicomyosocius okutanii subsp. Calyptogena okutanii (strain HA)</name>
    <dbReference type="NCBI Taxonomy" id="412965"/>
    <lineage>
        <taxon>Bacteria</taxon>
        <taxon>Pseudomonadati</taxon>
        <taxon>Pseudomonadota</taxon>
        <taxon>Gammaproteobacteria</taxon>
        <taxon>Candidatus Pseudothioglobaceae</taxon>
        <taxon>Candidatus Vesicomyosocius</taxon>
    </lineage>
</organism>
<keyword id="KW-0963">Cytoplasm</keyword>
<keyword id="KW-0255">Endonuclease</keyword>
<keyword id="KW-0378">Hydrolase</keyword>
<keyword id="KW-0479">Metal-binding</keyword>
<keyword id="KW-0540">Nuclease</keyword>
<keyword id="KW-1185">Reference proteome</keyword>
<keyword id="KW-0690">Ribosome biogenesis</keyword>
<keyword id="KW-0698">rRNA processing</keyword>
<keyword id="KW-0862">Zinc</keyword>
<accession>A5CXS1</accession>
<reference key="1">
    <citation type="journal article" date="2007" name="Curr. Biol.">
        <title>Reduced genome of the thioautotrophic intracellular symbiont in a deep-sea clam, Calyptogena okutanii.</title>
        <authorList>
            <person name="Kuwahara H."/>
            <person name="Yoshida T."/>
            <person name="Takaki Y."/>
            <person name="Shimamura S."/>
            <person name="Nishi S."/>
            <person name="Harada M."/>
            <person name="Matsuyama K."/>
            <person name="Takishita K."/>
            <person name="Kawato M."/>
            <person name="Uematsu K."/>
            <person name="Fujiwara Y."/>
            <person name="Sato T."/>
            <person name="Kato C."/>
            <person name="Kitagawa M."/>
            <person name="Kato I."/>
            <person name="Maruyama T."/>
        </authorList>
    </citation>
    <scope>NUCLEOTIDE SEQUENCE [LARGE SCALE GENOMIC DNA]</scope>
    <source>
        <strain>HA</strain>
    </source>
</reference>
<name>YBEY_VESOH</name>